<name>6PGL5_ARATH</name>
<proteinExistence type="evidence at transcript level"/>
<comment type="function">
    <text evidence="1">Catalyzes the hydrolysis of 6-phosphogluconolactone to 6-phosphogluconate.</text>
</comment>
<comment type="catalytic activity">
    <reaction evidence="1">
        <text>6-phospho-D-glucono-1,5-lactone + H2O = 6-phospho-D-gluconate + H(+)</text>
        <dbReference type="Rhea" id="RHEA:12556"/>
        <dbReference type="ChEBI" id="CHEBI:15377"/>
        <dbReference type="ChEBI" id="CHEBI:15378"/>
        <dbReference type="ChEBI" id="CHEBI:57955"/>
        <dbReference type="ChEBI" id="CHEBI:58759"/>
        <dbReference type="EC" id="3.1.1.31"/>
    </reaction>
</comment>
<comment type="pathway">
    <text evidence="5">Carbohydrate degradation; pentose phosphate pathway; D-ribulose 5-phosphate from D-glucose 6-phosphate (oxidative stage): step 2/3.</text>
</comment>
<comment type="subcellular location">
    <subcellularLocation>
        <location evidence="3">Cytoplasm</location>
        <location evidence="3">Cytosol</location>
    </subcellularLocation>
</comment>
<comment type="disruption phenotype">
    <text evidence="2">No visible phenotype under normal growth conditions.</text>
</comment>
<comment type="similarity">
    <text evidence="5">Belongs to the glucosamine/galactosamine-6-phosphate isomerase family. 6-phosphogluconolactonase subfamily.</text>
</comment>
<gene>
    <name evidence="4" type="primary">PGL5</name>
    <name evidence="6" type="ordered locus">At5g24420</name>
    <name evidence="7" type="ORF">K16H17.13</name>
</gene>
<protein>
    <recommendedName>
        <fullName evidence="5">Probable 6-phosphogluconolactonase 5</fullName>
        <shortName evidence="5">6PGL5</shortName>
        <ecNumber evidence="1">3.1.1.31</ecNumber>
    </recommendedName>
</protein>
<evidence type="ECO:0000250" key="1">
    <source>
        <dbReference type="UniProtKB" id="Q84WW2"/>
    </source>
</evidence>
<evidence type="ECO:0000269" key="2">
    <source>
    </source>
</evidence>
<evidence type="ECO:0000269" key="3">
    <source>
    </source>
</evidence>
<evidence type="ECO:0000303" key="4">
    <source>
    </source>
</evidence>
<evidence type="ECO:0000305" key="5"/>
<evidence type="ECO:0000312" key="6">
    <source>
        <dbReference type="Araport" id="AT5G24420"/>
    </source>
</evidence>
<evidence type="ECO:0000312" key="7">
    <source>
        <dbReference type="EMBL" id="BAB11235.1"/>
    </source>
</evidence>
<reference key="1">
    <citation type="journal article" date="1998" name="DNA Res.">
        <title>Structural analysis of Arabidopsis thaliana chromosome 5. VIII. Sequence features of the regions of 1,081,958 bp covered by seventeen physically assigned P1 and TAC clones.</title>
        <authorList>
            <person name="Asamizu E."/>
            <person name="Sato S."/>
            <person name="Kaneko T."/>
            <person name="Nakamura Y."/>
            <person name="Kotani H."/>
            <person name="Miyajima N."/>
            <person name="Tabata S."/>
        </authorList>
    </citation>
    <scope>NUCLEOTIDE SEQUENCE [LARGE SCALE GENOMIC DNA]</scope>
    <source>
        <strain>cv. Columbia</strain>
    </source>
</reference>
<reference key="2">
    <citation type="journal article" date="2017" name="Plant J.">
        <title>Araport11: a complete reannotation of the Arabidopsis thaliana reference genome.</title>
        <authorList>
            <person name="Cheng C.Y."/>
            <person name="Krishnakumar V."/>
            <person name="Chan A.P."/>
            <person name="Thibaud-Nissen F."/>
            <person name="Schobel S."/>
            <person name="Town C.D."/>
        </authorList>
    </citation>
    <scope>GENOME REANNOTATION</scope>
    <source>
        <strain>cv. Columbia</strain>
    </source>
</reference>
<reference key="3">
    <citation type="journal article" date="2003" name="Science">
        <title>Empirical analysis of transcriptional activity in the Arabidopsis genome.</title>
        <authorList>
            <person name="Yamada K."/>
            <person name="Lim J."/>
            <person name="Dale J.M."/>
            <person name="Chen H."/>
            <person name="Shinn P."/>
            <person name="Palm C.J."/>
            <person name="Southwick A.M."/>
            <person name="Wu H.C."/>
            <person name="Kim C.J."/>
            <person name="Nguyen M."/>
            <person name="Pham P.K."/>
            <person name="Cheuk R.F."/>
            <person name="Karlin-Newmann G."/>
            <person name="Liu S.X."/>
            <person name="Lam B."/>
            <person name="Sakano H."/>
            <person name="Wu T."/>
            <person name="Yu G."/>
            <person name="Miranda M."/>
            <person name="Quach H.L."/>
            <person name="Tripp M."/>
            <person name="Chang C.H."/>
            <person name="Lee J.M."/>
            <person name="Toriumi M.J."/>
            <person name="Chan M.M."/>
            <person name="Tang C.C."/>
            <person name="Onodera C.S."/>
            <person name="Deng J.M."/>
            <person name="Akiyama K."/>
            <person name="Ansari Y."/>
            <person name="Arakawa T."/>
            <person name="Banh J."/>
            <person name="Banno F."/>
            <person name="Bowser L."/>
            <person name="Brooks S.Y."/>
            <person name="Carninci P."/>
            <person name="Chao Q."/>
            <person name="Choy N."/>
            <person name="Enju A."/>
            <person name="Goldsmith A.D."/>
            <person name="Gurjal M."/>
            <person name="Hansen N.F."/>
            <person name="Hayashizaki Y."/>
            <person name="Johnson-Hopson C."/>
            <person name="Hsuan V.W."/>
            <person name="Iida K."/>
            <person name="Karnes M."/>
            <person name="Khan S."/>
            <person name="Koesema E."/>
            <person name="Ishida J."/>
            <person name="Jiang P.X."/>
            <person name="Jones T."/>
            <person name="Kawai J."/>
            <person name="Kamiya A."/>
            <person name="Meyers C."/>
            <person name="Nakajima M."/>
            <person name="Narusaka M."/>
            <person name="Seki M."/>
            <person name="Sakurai T."/>
            <person name="Satou M."/>
            <person name="Tamse R."/>
            <person name="Vaysberg M."/>
            <person name="Wallender E.K."/>
            <person name="Wong C."/>
            <person name="Yamamura Y."/>
            <person name="Yuan S."/>
            <person name="Shinozaki K."/>
            <person name="Davis R.W."/>
            <person name="Theologis A."/>
            <person name="Ecker J.R."/>
        </authorList>
    </citation>
    <scope>NUCLEOTIDE SEQUENCE [LARGE SCALE MRNA]</scope>
    <source>
        <strain>cv. Columbia</strain>
    </source>
</reference>
<reference key="4">
    <citation type="submission" date="2002-03" db="EMBL/GenBank/DDBJ databases">
        <title>Full-length cDNA from Arabidopsis thaliana.</title>
        <authorList>
            <person name="Brover V.V."/>
            <person name="Troukhan M.E."/>
            <person name="Alexandrov N.A."/>
            <person name="Lu Y.-P."/>
            <person name="Flavell R.B."/>
            <person name="Feldmann K.A."/>
        </authorList>
    </citation>
    <scope>NUCLEOTIDE SEQUENCE [LARGE SCALE MRNA]</scope>
</reference>
<reference key="5">
    <citation type="journal article" date="2009" name="Plant Cell Physiol.">
        <title>Characterization of Arabidopsis 6-phosphogluconolactonase T-DNA insertion mutants reveals an essential role for the oxidative section of the plastidic pentose phosphate pathway in plant growth and development.</title>
        <authorList>
            <person name="Xiong Y."/>
            <person name="DeFraia C."/>
            <person name="Williams D."/>
            <person name="Zhang X."/>
            <person name="Mou Z."/>
        </authorList>
    </citation>
    <scope>GENE FAMILY</scope>
    <scope>NOMENCLATURE</scope>
    <scope>DISRUPTION PHENOTYPE</scope>
</reference>
<reference key="6">
    <citation type="journal article" date="2014" name="Mol. Plant">
        <title>Dual-targeting of Arabidopsis 6-phosphogluconolactonase 3 (PGL3) to chloroplasts and peroxisomes involves interaction with Trx m2 in the cytosol.</title>
        <authorList>
            <person name="Hoelscher C."/>
            <person name="Meyer T."/>
            <person name="von Schaewen A."/>
        </authorList>
    </citation>
    <scope>SUBCELLULAR LOCATION</scope>
</reference>
<feature type="chain" id="PRO_0000288670" description="Probable 6-phosphogluconolactonase 5">
    <location>
        <begin position="1"/>
        <end position="252"/>
    </location>
</feature>
<feature type="sequence conflict" description="In Ref. 4; AAM61753." evidence="5" ref="4">
    <original>P</original>
    <variation>S</variation>
    <location>
        <position position="65"/>
    </location>
</feature>
<accession>Q8LEV7</accession>
<accession>Q9FIN0</accession>
<sequence length="252" mass="28476">MAQRKMIVFPTKNELSEAMAEYTANLSAKFIKEKGLFTVVLSGGDLIDWLCKLVQPPYIDSIEWPKWHVFWVDERVCAWEDPDSNYKLAMEGFLSKVPIPDKNIYAIDKHLAADGNAEHCATLYEECLKNLVKEKIIPISKKTGYPEFDLQLLGMGPDGHMASLFPNHPQINEKQKWVTYITDSPKPPPKRITFTLPVINSTLYNLMAICDKAPAKSVAEIMKHNNLSLPSAHLSAQVENVWYLDQAAASEL</sequence>
<keyword id="KW-0963">Cytoplasm</keyword>
<keyword id="KW-0378">Hydrolase</keyword>
<keyword id="KW-1185">Reference proteome</keyword>
<organism>
    <name type="scientific">Arabidopsis thaliana</name>
    <name type="common">Mouse-ear cress</name>
    <dbReference type="NCBI Taxonomy" id="3702"/>
    <lineage>
        <taxon>Eukaryota</taxon>
        <taxon>Viridiplantae</taxon>
        <taxon>Streptophyta</taxon>
        <taxon>Embryophyta</taxon>
        <taxon>Tracheophyta</taxon>
        <taxon>Spermatophyta</taxon>
        <taxon>Magnoliopsida</taxon>
        <taxon>eudicotyledons</taxon>
        <taxon>Gunneridae</taxon>
        <taxon>Pentapetalae</taxon>
        <taxon>rosids</taxon>
        <taxon>malvids</taxon>
        <taxon>Brassicales</taxon>
        <taxon>Brassicaceae</taxon>
        <taxon>Camelineae</taxon>
        <taxon>Arabidopsis</taxon>
    </lineage>
</organism>
<dbReference type="EC" id="3.1.1.31" evidence="1"/>
<dbReference type="EMBL" id="AB016884">
    <property type="protein sequence ID" value="BAB11235.1"/>
    <property type="molecule type" value="Genomic_DNA"/>
</dbReference>
<dbReference type="EMBL" id="CP002688">
    <property type="protein sequence ID" value="AED93309.1"/>
    <property type="molecule type" value="Genomic_DNA"/>
</dbReference>
<dbReference type="EMBL" id="AF378879">
    <property type="protein sequence ID" value="AAK55682.1"/>
    <property type="molecule type" value="mRNA"/>
</dbReference>
<dbReference type="EMBL" id="AY052737">
    <property type="protein sequence ID" value="AAK96451.1"/>
    <property type="molecule type" value="mRNA"/>
</dbReference>
<dbReference type="EMBL" id="AY085203">
    <property type="protein sequence ID" value="AAM61753.1"/>
    <property type="molecule type" value="mRNA"/>
</dbReference>
<dbReference type="RefSeq" id="NP_197830.1">
    <property type="nucleotide sequence ID" value="NM_122350.4"/>
</dbReference>
<dbReference type="SMR" id="Q8LEV7"/>
<dbReference type="FunCoup" id="Q8LEV7">
    <property type="interactions" value="3266"/>
</dbReference>
<dbReference type="STRING" id="3702.Q8LEV7"/>
<dbReference type="iPTMnet" id="Q8LEV7"/>
<dbReference type="MetOSite" id="Q8LEV7"/>
<dbReference type="PaxDb" id="3702-AT5G24420.1"/>
<dbReference type="ProteomicsDB" id="244623"/>
<dbReference type="EnsemblPlants" id="AT5G24420.1">
    <property type="protein sequence ID" value="AT5G24420.1"/>
    <property type="gene ID" value="AT5G24420"/>
</dbReference>
<dbReference type="GeneID" id="832513"/>
<dbReference type="Gramene" id="AT5G24420.1">
    <property type="protein sequence ID" value="AT5G24420.1"/>
    <property type="gene ID" value="AT5G24420"/>
</dbReference>
<dbReference type="KEGG" id="ath:AT5G24420"/>
<dbReference type="Araport" id="AT5G24420"/>
<dbReference type="TAIR" id="AT5G24420">
    <property type="gene designation" value="PGL5"/>
</dbReference>
<dbReference type="eggNOG" id="KOG3147">
    <property type="taxonomic scope" value="Eukaryota"/>
</dbReference>
<dbReference type="HOGENOM" id="CLU_053947_0_0_1"/>
<dbReference type="InParanoid" id="Q8LEV7"/>
<dbReference type="OMA" id="VENVWYL"/>
<dbReference type="PhylomeDB" id="Q8LEV7"/>
<dbReference type="BioCyc" id="ARA:AT5G24420-MONOMER"/>
<dbReference type="BRENDA" id="3.1.1.31">
    <property type="organism ID" value="399"/>
</dbReference>
<dbReference type="UniPathway" id="UPA00115">
    <property type="reaction ID" value="UER00409"/>
</dbReference>
<dbReference type="PRO" id="PR:Q8LEV7"/>
<dbReference type="Proteomes" id="UP000006548">
    <property type="component" value="Chromosome 5"/>
</dbReference>
<dbReference type="ExpressionAtlas" id="Q8LEV7">
    <property type="expression patterns" value="baseline and differential"/>
</dbReference>
<dbReference type="GO" id="GO:0005829">
    <property type="term" value="C:cytosol"/>
    <property type="evidence" value="ECO:0000314"/>
    <property type="project" value="TAIR"/>
</dbReference>
<dbReference type="GO" id="GO:0017057">
    <property type="term" value="F:6-phosphogluconolactonase activity"/>
    <property type="evidence" value="ECO:0007669"/>
    <property type="project" value="UniProtKB-EC"/>
</dbReference>
<dbReference type="GO" id="GO:0005975">
    <property type="term" value="P:carbohydrate metabolic process"/>
    <property type="evidence" value="ECO:0007669"/>
    <property type="project" value="InterPro"/>
</dbReference>
<dbReference type="GO" id="GO:0006098">
    <property type="term" value="P:pentose-phosphate shunt"/>
    <property type="evidence" value="ECO:0007669"/>
    <property type="project" value="UniProtKB-UniPathway"/>
</dbReference>
<dbReference type="CDD" id="cd01400">
    <property type="entry name" value="6PGL"/>
    <property type="match status" value="1"/>
</dbReference>
<dbReference type="FunFam" id="3.40.50.1360:FF:000009">
    <property type="entry name" value="Probable 6-phosphogluconolactonase"/>
    <property type="match status" value="1"/>
</dbReference>
<dbReference type="Gene3D" id="3.40.50.1360">
    <property type="match status" value="1"/>
</dbReference>
<dbReference type="InterPro" id="IPR005900">
    <property type="entry name" value="6-phosphogluconolactonase_DevB"/>
</dbReference>
<dbReference type="InterPro" id="IPR006148">
    <property type="entry name" value="Glc/Gal-6P_isomerase"/>
</dbReference>
<dbReference type="InterPro" id="IPR037171">
    <property type="entry name" value="NagB/RpiA_transferase-like"/>
</dbReference>
<dbReference type="InterPro" id="IPR039104">
    <property type="entry name" value="PGLS"/>
</dbReference>
<dbReference type="NCBIfam" id="TIGR01198">
    <property type="entry name" value="pgl"/>
    <property type="match status" value="1"/>
</dbReference>
<dbReference type="PANTHER" id="PTHR11054">
    <property type="entry name" value="6-PHOSPHOGLUCONOLACTONASE"/>
    <property type="match status" value="1"/>
</dbReference>
<dbReference type="PANTHER" id="PTHR11054:SF16">
    <property type="entry name" value="6-PHOSPHOGLUCONOLACTONASE 5-RELATED"/>
    <property type="match status" value="1"/>
</dbReference>
<dbReference type="Pfam" id="PF01182">
    <property type="entry name" value="Glucosamine_iso"/>
    <property type="match status" value="1"/>
</dbReference>
<dbReference type="SUPFAM" id="SSF100950">
    <property type="entry name" value="NagB/RpiA/CoA transferase-like"/>
    <property type="match status" value="1"/>
</dbReference>